<accession>Q5U3H2</accession>
<accession>Q1LWF0</accession>
<protein>
    <recommendedName>
        <fullName evidence="7">Histone-lysine N-methyltransferase KMT5B</fullName>
    </recommendedName>
    <alternativeName>
        <fullName evidence="3">Lysine-specific methyltransferase 5B</fullName>
    </alternativeName>
    <alternativeName>
        <fullName>Suppressor of variegation 4-20 homolog 1</fullName>
        <shortName>Su(var)4-20 homolog 1</shortName>
        <shortName>Suv4-20h1</shortName>
    </alternativeName>
    <alternativeName>
        <fullName evidence="7">[histone H4]-N-methyl-L-lysine20 N-methyltransferase KMT5B</fullName>
        <ecNumber evidence="3">2.1.1.362</ecNumber>
    </alternativeName>
    <alternativeName>
        <fullName evidence="7">[histone H4]-lysine20 N-methyltransferase KMT5B</fullName>
        <ecNumber evidence="3">2.1.1.361</ecNumber>
    </alternativeName>
</protein>
<keyword id="KW-0156">Chromatin regulator</keyword>
<keyword id="KW-0158">Chromosome</keyword>
<keyword id="KW-0479">Metal-binding</keyword>
<keyword id="KW-0489">Methyltransferase</keyword>
<keyword id="KW-0517">Myogenesis</keyword>
<keyword id="KW-0539">Nucleus</keyword>
<keyword id="KW-1185">Reference proteome</keyword>
<keyword id="KW-0678">Repressor</keyword>
<keyword id="KW-0949">S-adenosyl-L-methionine</keyword>
<keyword id="KW-0804">Transcription</keyword>
<keyword id="KW-0805">Transcription regulation</keyword>
<keyword id="KW-0808">Transferase</keyword>
<keyword id="KW-0862">Zinc</keyword>
<proteinExistence type="evidence at transcript level"/>
<name>KMT5B_DANRE</name>
<reference key="1">
    <citation type="journal article" date="2013" name="Nature">
        <title>The zebrafish reference genome sequence and its relationship to the human genome.</title>
        <authorList>
            <person name="Howe K."/>
            <person name="Clark M.D."/>
            <person name="Torroja C.F."/>
            <person name="Torrance J."/>
            <person name="Berthelot C."/>
            <person name="Muffato M."/>
            <person name="Collins J.E."/>
            <person name="Humphray S."/>
            <person name="McLaren K."/>
            <person name="Matthews L."/>
            <person name="McLaren S."/>
            <person name="Sealy I."/>
            <person name="Caccamo M."/>
            <person name="Churcher C."/>
            <person name="Scott C."/>
            <person name="Barrett J.C."/>
            <person name="Koch R."/>
            <person name="Rauch G.J."/>
            <person name="White S."/>
            <person name="Chow W."/>
            <person name="Kilian B."/>
            <person name="Quintais L.T."/>
            <person name="Guerra-Assuncao J.A."/>
            <person name="Zhou Y."/>
            <person name="Gu Y."/>
            <person name="Yen J."/>
            <person name="Vogel J.H."/>
            <person name="Eyre T."/>
            <person name="Redmond S."/>
            <person name="Banerjee R."/>
            <person name="Chi J."/>
            <person name="Fu B."/>
            <person name="Langley E."/>
            <person name="Maguire S.F."/>
            <person name="Laird G.K."/>
            <person name="Lloyd D."/>
            <person name="Kenyon E."/>
            <person name="Donaldson S."/>
            <person name="Sehra H."/>
            <person name="Almeida-King J."/>
            <person name="Loveland J."/>
            <person name="Trevanion S."/>
            <person name="Jones M."/>
            <person name="Quail M."/>
            <person name="Willey D."/>
            <person name="Hunt A."/>
            <person name="Burton J."/>
            <person name="Sims S."/>
            <person name="McLay K."/>
            <person name="Plumb B."/>
            <person name="Davis J."/>
            <person name="Clee C."/>
            <person name="Oliver K."/>
            <person name="Clark R."/>
            <person name="Riddle C."/>
            <person name="Elliot D."/>
            <person name="Threadgold G."/>
            <person name="Harden G."/>
            <person name="Ware D."/>
            <person name="Begum S."/>
            <person name="Mortimore B."/>
            <person name="Kerry G."/>
            <person name="Heath P."/>
            <person name="Phillimore B."/>
            <person name="Tracey A."/>
            <person name="Corby N."/>
            <person name="Dunn M."/>
            <person name="Johnson C."/>
            <person name="Wood J."/>
            <person name="Clark S."/>
            <person name="Pelan S."/>
            <person name="Griffiths G."/>
            <person name="Smith M."/>
            <person name="Glithero R."/>
            <person name="Howden P."/>
            <person name="Barker N."/>
            <person name="Lloyd C."/>
            <person name="Stevens C."/>
            <person name="Harley J."/>
            <person name="Holt K."/>
            <person name="Panagiotidis G."/>
            <person name="Lovell J."/>
            <person name="Beasley H."/>
            <person name="Henderson C."/>
            <person name="Gordon D."/>
            <person name="Auger K."/>
            <person name="Wright D."/>
            <person name="Collins J."/>
            <person name="Raisen C."/>
            <person name="Dyer L."/>
            <person name="Leung K."/>
            <person name="Robertson L."/>
            <person name="Ambridge K."/>
            <person name="Leongamornlert D."/>
            <person name="McGuire S."/>
            <person name="Gilderthorp R."/>
            <person name="Griffiths C."/>
            <person name="Manthravadi D."/>
            <person name="Nichol S."/>
            <person name="Barker G."/>
            <person name="Whitehead S."/>
            <person name="Kay M."/>
            <person name="Brown J."/>
            <person name="Murnane C."/>
            <person name="Gray E."/>
            <person name="Humphries M."/>
            <person name="Sycamore N."/>
            <person name="Barker D."/>
            <person name="Saunders D."/>
            <person name="Wallis J."/>
            <person name="Babbage A."/>
            <person name="Hammond S."/>
            <person name="Mashreghi-Mohammadi M."/>
            <person name="Barr L."/>
            <person name="Martin S."/>
            <person name="Wray P."/>
            <person name="Ellington A."/>
            <person name="Matthews N."/>
            <person name="Ellwood M."/>
            <person name="Woodmansey R."/>
            <person name="Clark G."/>
            <person name="Cooper J."/>
            <person name="Tromans A."/>
            <person name="Grafham D."/>
            <person name="Skuce C."/>
            <person name="Pandian R."/>
            <person name="Andrews R."/>
            <person name="Harrison E."/>
            <person name="Kimberley A."/>
            <person name="Garnett J."/>
            <person name="Fosker N."/>
            <person name="Hall R."/>
            <person name="Garner P."/>
            <person name="Kelly D."/>
            <person name="Bird C."/>
            <person name="Palmer S."/>
            <person name="Gehring I."/>
            <person name="Berger A."/>
            <person name="Dooley C.M."/>
            <person name="Ersan-Urun Z."/>
            <person name="Eser C."/>
            <person name="Geiger H."/>
            <person name="Geisler M."/>
            <person name="Karotki L."/>
            <person name="Kirn A."/>
            <person name="Konantz J."/>
            <person name="Konantz M."/>
            <person name="Oberlander M."/>
            <person name="Rudolph-Geiger S."/>
            <person name="Teucke M."/>
            <person name="Lanz C."/>
            <person name="Raddatz G."/>
            <person name="Osoegawa K."/>
            <person name="Zhu B."/>
            <person name="Rapp A."/>
            <person name="Widaa S."/>
            <person name="Langford C."/>
            <person name="Yang F."/>
            <person name="Schuster S.C."/>
            <person name="Carter N.P."/>
            <person name="Harrow J."/>
            <person name="Ning Z."/>
            <person name="Herrero J."/>
            <person name="Searle S.M."/>
            <person name="Enright A."/>
            <person name="Geisler R."/>
            <person name="Plasterk R.H."/>
            <person name="Lee C."/>
            <person name="Westerfield M."/>
            <person name="de Jong P.J."/>
            <person name="Zon L.I."/>
            <person name="Postlethwait J.H."/>
            <person name="Nusslein-Volhard C."/>
            <person name="Hubbard T.J."/>
            <person name="Roest Crollius H."/>
            <person name="Rogers J."/>
            <person name="Stemple D.L."/>
        </authorList>
    </citation>
    <scope>NUCLEOTIDE SEQUENCE [LARGE SCALE GENOMIC DNA]</scope>
    <source>
        <strain>Tuebingen</strain>
    </source>
</reference>
<reference key="2">
    <citation type="submission" date="2004-11" db="EMBL/GenBank/DDBJ databases">
        <authorList>
            <consortium name="NIH - Zebrafish Gene Collection (ZGC) project"/>
        </authorList>
    </citation>
    <scope>NUCLEOTIDE SEQUENCE [LARGE SCALE MRNA]</scope>
    <source>
        <tissue>Ovary</tissue>
    </source>
</reference>
<organism>
    <name type="scientific">Danio rerio</name>
    <name type="common">Zebrafish</name>
    <name type="synonym">Brachydanio rerio</name>
    <dbReference type="NCBI Taxonomy" id="7955"/>
    <lineage>
        <taxon>Eukaryota</taxon>
        <taxon>Metazoa</taxon>
        <taxon>Chordata</taxon>
        <taxon>Craniata</taxon>
        <taxon>Vertebrata</taxon>
        <taxon>Euteleostomi</taxon>
        <taxon>Actinopterygii</taxon>
        <taxon>Neopterygii</taxon>
        <taxon>Teleostei</taxon>
        <taxon>Ostariophysi</taxon>
        <taxon>Cypriniformes</taxon>
        <taxon>Danionidae</taxon>
        <taxon>Danioninae</taxon>
        <taxon>Danio</taxon>
    </lineage>
</organism>
<feature type="chain" id="PRO_0000281790" description="Histone-lysine N-methyltransferase KMT5B">
    <location>
        <begin position="1"/>
        <end position="808"/>
    </location>
</feature>
<feature type="domain" description="SET" evidence="4">
    <location>
        <begin position="168"/>
        <end position="283"/>
    </location>
</feature>
<feature type="region of interest" description="Disordered" evidence="6">
    <location>
        <begin position="1"/>
        <end position="68"/>
    </location>
</feature>
<feature type="region of interest" description="Disordered" evidence="6">
    <location>
        <begin position="339"/>
        <end position="569"/>
    </location>
</feature>
<feature type="region of interest" description="Disordered" evidence="6">
    <location>
        <begin position="599"/>
        <end position="684"/>
    </location>
</feature>
<feature type="compositionally biased region" description="Polar residues" evidence="6">
    <location>
        <begin position="18"/>
        <end position="34"/>
    </location>
</feature>
<feature type="compositionally biased region" description="Polar residues" evidence="6">
    <location>
        <begin position="343"/>
        <end position="368"/>
    </location>
</feature>
<feature type="compositionally biased region" description="Low complexity" evidence="6">
    <location>
        <begin position="391"/>
        <end position="405"/>
    </location>
</feature>
<feature type="compositionally biased region" description="Polar residues" evidence="6">
    <location>
        <begin position="437"/>
        <end position="449"/>
    </location>
</feature>
<feature type="compositionally biased region" description="Basic and acidic residues" evidence="6">
    <location>
        <begin position="450"/>
        <end position="460"/>
    </location>
</feature>
<feature type="compositionally biased region" description="Polar residues" evidence="6">
    <location>
        <begin position="468"/>
        <end position="480"/>
    </location>
</feature>
<feature type="compositionally biased region" description="Polar residues" evidence="6">
    <location>
        <begin position="537"/>
        <end position="546"/>
    </location>
</feature>
<feature type="compositionally biased region" description="Basic residues" evidence="6">
    <location>
        <begin position="613"/>
        <end position="626"/>
    </location>
</feature>
<feature type="compositionally biased region" description="Basic and acidic residues" evidence="6">
    <location>
        <begin position="651"/>
        <end position="661"/>
    </location>
</feature>
<feature type="compositionally biased region" description="Low complexity" evidence="6">
    <location>
        <begin position="662"/>
        <end position="673"/>
    </location>
</feature>
<feature type="compositionally biased region" description="Basic and acidic residues" evidence="6">
    <location>
        <begin position="674"/>
        <end position="683"/>
    </location>
</feature>
<feature type="binding site" evidence="3">
    <location>
        <position position="96"/>
    </location>
    <ligand>
        <name>S-adenosyl-L-methionine</name>
        <dbReference type="ChEBI" id="CHEBI:59789"/>
    </ligand>
</feature>
<feature type="binding site" evidence="3">
    <location>
        <begin position="178"/>
        <end position="181"/>
    </location>
    <ligand>
        <name>S-adenosyl-L-methionine</name>
        <dbReference type="ChEBI" id="CHEBI:59789"/>
    </ligand>
</feature>
<feature type="binding site" evidence="3">
    <location>
        <position position="185"/>
    </location>
    <ligand>
        <name>S-adenosyl-L-methionine</name>
        <dbReference type="ChEBI" id="CHEBI:59789"/>
    </ligand>
</feature>
<feature type="binding site" evidence="3">
    <location>
        <position position="232"/>
    </location>
    <ligand>
        <name>S-adenosyl-L-methionine</name>
        <dbReference type="ChEBI" id="CHEBI:59789"/>
    </ligand>
</feature>
<feature type="binding site" evidence="3">
    <location>
        <begin position="247"/>
        <end position="248"/>
    </location>
    <ligand>
        <name>S-adenosyl-L-methionine</name>
        <dbReference type="ChEBI" id="CHEBI:59789"/>
    </ligand>
</feature>
<feature type="binding site" evidence="3">
    <location>
        <position position="250"/>
    </location>
    <ligand>
        <name>Zn(2+)</name>
        <dbReference type="ChEBI" id="CHEBI:29105"/>
    </ligand>
</feature>
<feature type="binding site" evidence="3">
    <location>
        <position position="294"/>
    </location>
    <ligand>
        <name>Zn(2+)</name>
        <dbReference type="ChEBI" id="CHEBI:29105"/>
    </ligand>
</feature>
<feature type="binding site" evidence="3">
    <location>
        <position position="295"/>
    </location>
    <ligand>
        <name>S-adenosyl-L-methionine</name>
        <dbReference type="ChEBI" id="CHEBI:59789"/>
    </ligand>
</feature>
<feature type="binding site" evidence="3">
    <location>
        <position position="296"/>
    </location>
    <ligand>
        <name>Zn(2+)</name>
        <dbReference type="ChEBI" id="CHEBI:29105"/>
    </ligand>
</feature>
<feature type="binding site" evidence="3">
    <location>
        <position position="299"/>
    </location>
    <ligand>
        <name>Zn(2+)</name>
        <dbReference type="ChEBI" id="CHEBI:29105"/>
    </ligand>
</feature>
<feature type="sequence conflict" description="In Ref. 2; AAH85544." evidence="7" ref="2">
    <original>L</original>
    <variation>P</variation>
    <location>
        <position position="535"/>
    </location>
</feature>
<comment type="function">
    <text evidence="2 3">Histone methyltransferase that specifically methylates monomethylated 'Lys-20' (H4K20me1) and dimethylated 'Lys-20' (H4K20me2) of histone H4 to produce respectively dimethylated 'Lys-20' (H4K20me2) and trimethylated 'Lys-20' (H4K20me3) and thus regulates transcription and maintenance of genome integrity. In vitro also methylates unmodified 'Lys-20' (H4K20me0) of histone H4 and nucleosomes (By similarity). H4 'Lys-20' trimethylation represents a specific tag for epigenetic transcriptional repression. Mainly functions in pericentric heterochromatin regions, thereby playing a central role in the establishment of constitutive heterochromatin in these regions. KMT5B is targeted to histone H3 via its interaction with RB1 family proteins (RB1, RBL1 and RBL2) (By similarity). Plays a role in myogenesis by regulating the expression of target genes, such as EID3. Facilitates TP53BP1 foci formation upon DNA damage and proficient non-homologous end-joining (NHEJ)-directed DNA repair by catalyzing the di- and trimethylation of 'Lys-20' of histone H4 (By similarity). May play a role in class switch reconbination by catalyzing the di- and trimethylation of 'Lys-20' of histone H4 (By similarity).</text>
</comment>
<comment type="catalytic activity">
    <reaction evidence="3">
        <text>N(6)-methyl-L-lysyl(20)-[histone H4] + S-adenosyl-L-methionine = N(6),N(6)-dimethyl-L-lysyl(20)-[histone H4] + S-adenosyl-L-homocysteine + H(+)</text>
        <dbReference type="Rhea" id="RHEA:60348"/>
        <dbReference type="Rhea" id="RHEA-COMP:15555"/>
        <dbReference type="Rhea" id="RHEA-COMP:15556"/>
        <dbReference type="ChEBI" id="CHEBI:15378"/>
        <dbReference type="ChEBI" id="CHEBI:57856"/>
        <dbReference type="ChEBI" id="CHEBI:59789"/>
        <dbReference type="ChEBI" id="CHEBI:61929"/>
        <dbReference type="ChEBI" id="CHEBI:61976"/>
        <dbReference type="EC" id="2.1.1.362"/>
    </reaction>
    <physiologicalReaction direction="left-to-right" evidence="3">
        <dbReference type="Rhea" id="RHEA:60349"/>
    </physiologicalReaction>
</comment>
<comment type="catalytic activity">
    <reaction evidence="3">
        <text>N(6),N(6)-dimethyl-L-lysyl(20)-[histone H4] + S-adenosyl-L-methionine = N(6),N(6),N(6)-trimethyl-L-lysyl(20)-[histone H4] + S-adenosyl-L-homocysteine + H(+)</text>
        <dbReference type="Rhea" id="RHEA:61992"/>
        <dbReference type="Rhea" id="RHEA-COMP:15556"/>
        <dbReference type="Rhea" id="RHEA-COMP:15998"/>
        <dbReference type="ChEBI" id="CHEBI:15378"/>
        <dbReference type="ChEBI" id="CHEBI:57856"/>
        <dbReference type="ChEBI" id="CHEBI:59789"/>
        <dbReference type="ChEBI" id="CHEBI:61961"/>
        <dbReference type="ChEBI" id="CHEBI:61976"/>
    </reaction>
    <physiologicalReaction direction="left-to-right" evidence="3">
        <dbReference type="Rhea" id="RHEA:61993"/>
    </physiologicalReaction>
</comment>
<comment type="catalytic activity">
    <reaction evidence="3">
        <text>L-lysyl(20)-[histone H4] + S-adenosyl-L-methionine = N(6)-methyl-L-lysyl(20)-[histone H4] + S-adenosyl-L-homocysteine + H(+)</text>
        <dbReference type="Rhea" id="RHEA:60344"/>
        <dbReference type="Rhea" id="RHEA-COMP:15554"/>
        <dbReference type="Rhea" id="RHEA-COMP:15555"/>
        <dbReference type="ChEBI" id="CHEBI:15378"/>
        <dbReference type="ChEBI" id="CHEBI:29969"/>
        <dbReference type="ChEBI" id="CHEBI:57856"/>
        <dbReference type="ChEBI" id="CHEBI:59789"/>
        <dbReference type="ChEBI" id="CHEBI:61929"/>
        <dbReference type="EC" id="2.1.1.361"/>
    </reaction>
    <physiologicalReaction direction="left-to-right" evidence="3">
        <dbReference type="Rhea" id="RHEA:60345"/>
    </physiologicalReaction>
</comment>
<comment type="subcellular location">
    <subcellularLocation>
        <location>Nucleus</location>
    </subcellularLocation>
    <subcellularLocation>
        <location evidence="1">Chromosome</location>
    </subcellularLocation>
    <text evidence="1">Associated with pericentric heterochromatin.</text>
</comment>
<comment type="similarity">
    <text evidence="5">Belongs to the class V-like SAM-binding methyltransferase superfamily. Histone-lysine methyltransferase family. Suvar4-20 subfamily.</text>
</comment>
<dbReference type="EC" id="2.1.1.362" evidence="3"/>
<dbReference type="EC" id="2.1.1.361" evidence="3"/>
<dbReference type="EMBL" id="BX571884">
    <property type="protein sequence ID" value="CAK05146.1"/>
    <property type="molecule type" value="Genomic_DNA"/>
</dbReference>
<dbReference type="EMBL" id="BC085544">
    <property type="protein sequence ID" value="AAH85544.1"/>
    <property type="molecule type" value="mRNA"/>
</dbReference>
<dbReference type="RefSeq" id="NP_001007338.1">
    <property type="nucleotide sequence ID" value="NM_001007337.2"/>
</dbReference>
<dbReference type="RefSeq" id="XP_017207456.1">
    <property type="nucleotide sequence ID" value="XM_017351967.1"/>
</dbReference>
<dbReference type="SMR" id="Q5U3H2"/>
<dbReference type="FunCoup" id="Q5U3H2">
    <property type="interactions" value="1028"/>
</dbReference>
<dbReference type="STRING" id="7955.ENSDARP00000060190"/>
<dbReference type="PaxDb" id="7955-ENSDARP00000060190"/>
<dbReference type="Ensembl" id="ENSDART00000060191">
    <property type="protein sequence ID" value="ENSDARP00000060190"/>
    <property type="gene ID" value="ENSDARG00000041081"/>
</dbReference>
<dbReference type="GeneID" id="572849"/>
<dbReference type="KEGG" id="dre:572849"/>
<dbReference type="AGR" id="ZFIN:ZDB-GENE-041114-22"/>
<dbReference type="CTD" id="51111"/>
<dbReference type="ZFIN" id="ZDB-GENE-041114-22">
    <property type="gene designation" value="kmt5b"/>
</dbReference>
<dbReference type="eggNOG" id="KOG2589">
    <property type="taxonomic scope" value="Eukaryota"/>
</dbReference>
<dbReference type="HOGENOM" id="CLU_328991_0_0_1"/>
<dbReference type="InParanoid" id="Q5U3H2"/>
<dbReference type="OMA" id="NDHAQTK"/>
<dbReference type="OrthoDB" id="6627536at2759"/>
<dbReference type="PhylomeDB" id="Q5U3H2"/>
<dbReference type="TreeFam" id="TF106433"/>
<dbReference type="Reactome" id="R-DRE-3214841">
    <property type="pathway name" value="PKMTs methylate histone lysines"/>
</dbReference>
<dbReference type="PRO" id="PR:Q5U3H2"/>
<dbReference type="Proteomes" id="UP000000437">
    <property type="component" value="Alternate scaffold 18"/>
</dbReference>
<dbReference type="Proteomes" id="UP000000437">
    <property type="component" value="Chromosome 18"/>
</dbReference>
<dbReference type="Bgee" id="ENSDARG00000041081">
    <property type="expression patterns" value="Expressed in paraxial mesoderm and 28 other cell types or tissues"/>
</dbReference>
<dbReference type="GO" id="GO:0005694">
    <property type="term" value="C:chromosome"/>
    <property type="evidence" value="ECO:0007669"/>
    <property type="project" value="UniProtKB-SubCell"/>
</dbReference>
<dbReference type="GO" id="GO:0005634">
    <property type="term" value="C:nucleus"/>
    <property type="evidence" value="ECO:0000318"/>
    <property type="project" value="GO_Central"/>
</dbReference>
<dbReference type="GO" id="GO:0003682">
    <property type="term" value="F:chromatin binding"/>
    <property type="evidence" value="ECO:0000250"/>
    <property type="project" value="UniProtKB"/>
</dbReference>
<dbReference type="GO" id="GO:0042799">
    <property type="term" value="F:histone H4K20 methyltransferase activity"/>
    <property type="evidence" value="ECO:0000316"/>
    <property type="project" value="ZFIN"/>
</dbReference>
<dbReference type="GO" id="GO:0140944">
    <property type="term" value="F:histone H4K20 monomethyltransferase activity"/>
    <property type="evidence" value="ECO:0007669"/>
    <property type="project" value="UniProtKB-EC"/>
</dbReference>
<dbReference type="GO" id="GO:0140941">
    <property type="term" value="F:histone H4K20me methyltransferase activity"/>
    <property type="evidence" value="ECO:0007669"/>
    <property type="project" value="UniProtKB-EC"/>
</dbReference>
<dbReference type="GO" id="GO:0046872">
    <property type="term" value="F:metal ion binding"/>
    <property type="evidence" value="ECO:0007669"/>
    <property type="project" value="UniProtKB-KW"/>
</dbReference>
<dbReference type="GO" id="GO:1904047">
    <property type="term" value="F:S-adenosyl-L-methionine binding"/>
    <property type="evidence" value="ECO:0000250"/>
    <property type="project" value="UniProtKB"/>
</dbReference>
<dbReference type="GO" id="GO:0006281">
    <property type="term" value="P:DNA repair"/>
    <property type="evidence" value="ECO:0000250"/>
    <property type="project" value="UniProtKB"/>
</dbReference>
<dbReference type="GO" id="GO:0032259">
    <property type="term" value="P:methylation"/>
    <property type="evidence" value="ECO:0007669"/>
    <property type="project" value="UniProtKB-KW"/>
</dbReference>
<dbReference type="GO" id="GO:0007517">
    <property type="term" value="P:muscle organ development"/>
    <property type="evidence" value="ECO:0007669"/>
    <property type="project" value="UniProtKB-KW"/>
</dbReference>
<dbReference type="GO" id="GO:2001034">
    <property type="term" value="P:positive regulation of double-strand break repair via nonhomologous end joining"/>
    <property type="evidence" value="ECO:0000250"/>
    <property type="project" value="UniProtKB"/>
</dbReference>
<dbReference type="GO" id="GO:0045830">
    <property type="term" value="P:positive regulation of isotype switching"/>
    <property type="evidence" value="ECO:0000250"/>
    <property type="project" value="UniProtKB"/>
</dbReference>
<dbReference type="GO" id="GO:0040014">
    <property type="term" value="P:regulation of multicellular organism growth"/>
    <property type="evidence" value="ECO:0000316"/>
    <property type="project" value="ZFIN"/>
</dbReference>
<dbReference type="CDD" id="cd19184">
    <property type="entry name" value="SET_KMT5B"/>
    <property type="match status" value="1"/>
</dbReference>
<dbReference type="FunFam" id="1.10.10.1700:FF:000001">
    <property type="entry name" value="Histone-lysine N-methyltransferase"/>
    <property type="match status" value="1"/>
</dbReference>
<dbReference type="FunFam" id="2.170.270.10:FF:000006">
    <property type="entry name" value="Histone-lysine N-methyltransferase"/>
    <property type="match status" value="1"/>
</dbReference>
<dbReference type="Gene3D" id="1.10.10.1700">
    <property type="entry name" value="Histone-lysine N-methyltransferase"/>
    <property type="match status" value="1"/>
</dbReference>
<dbReference type="Gene3D" id="2.170.270.10">
    <property type="entry name" value="SET domain"/>
    <property type="match status" value="1"/>
</dbReference>
<dbReference type="InterPro" id="IPR041938">
    <property type="entry name" value="Hist-Lys_N-MTase_N"/>
</dbReference>
<dbReference type="InterPro" id="IPR044424">
    <property type="entry name" value="KMT5B_SET"/>
</dbReference>
<dbReference type="InterPro" id="IPR001214">
    <property type="entry name" value="SET_dom"/>
</dbReference>
<dbReference type="InterPro" id="IPR046341">
    <property type="entry name" value="SET_dom_sf"/>
</dbReference>
<dbReference type="InterPro" id="IPR039977">
    <property type="entry name" value="Suv4-20/Set9"/>
</dbReference>
<dbReference type="InterPro" id="IPR025790">
    <property type="entry name" value="Suv4-20_animal"/>
</dbReference>
<dbReference type="PANTHER" id="PTHR12977:SF4">
    <property type="entry name" value="HISTONE-LYSINE N-METHYLTRANSFERASE KMT5B"/>
    <property type="match status" value="1"/>
</dbReference>
<dbReference type="PANTHER" id="PTHR12977">
    <property type="entry name" value="SUPPRESSOR OF VARIEGATION 4-20-RELATED"/>
    <property type="match status" value="1"/>
</dbReference>
<dbReference type="Pfam" id="PF00856">
    <property type="entry name" value="SET"/>
    <property type="match status" value="1"/>
</dbReference>
<dbReference type="SMART" id="SM00317">
    <property type="entry name" value="SET"/>
    <property type="match status" value="1"/>
</dbReference>
<dbReference type="SUPFAM" id="SSF82199">
    <property type="entry name" value="SET domain"/>
    <property type="match status" value="1"/>
</dbReference>
<dbReference type="PROSITE" id="PS51570">
    <property type="entry name" value="SAM_MT43_SUVAR420_2"/>
    <property type="match status" value="1"/>
</dbReference>
<dbReference type="PROSITE" id="PS50280">
    <property type="entry name" value="SET"/>
    <property type="match status" value="1"/>
</dbReference>
<evidence type="ECO:0000250" key="1"/>
<evidence type="ECO:0000250" key="2">
    <source>
        <dbReference type="UniProtKB" id="Q3U8K7"/>
    </source>
</evidence>
<evidence type="ECO:0000250" key="3">
    <source>
        <dbReference type="UniProtKB" id="Q4FZB7"/>
    </source>
</evidence>
<evidence type="ECO:0000255" key="4">
    <source>
        <dbReference type="PROSITE-ProRule" id="PRU00190"/>
    </source>
</evidence>
<evidence type="ECO:0000255" key="5">
    <source>
        <dbReference type="PROSITE-ProRule" id="PRU00903"/>
    </source>
</evidence>
<evidence type="ECO:0000256" key="6">
    <source>
        <dbReference type="SAM" id="MobiDB-lite"/>
    </source>
</evidence>
<evidence type="ECO:0000305" key="7"/>
<sequence>MGESKNMVLNGRRHGRKFSSNQPVSKSRLQNTQRSHLRQNKGSPSVRRCSRRCGGAPPEAERRHVPSSGMTAKELCEYDDLSTSLILDPYLGFQTHKMNTRFRPIKGRQRELREIIELFKKHDNLEKAFQALTSGDWTRHHFLNKTKSQEKLFKAHVFVYLRMFASDSGFEILSCNRYSSEQNGAKIVATKDWKRNDKIEHLVGCIAELSPSEERMLLRHGENDFSVMYSTRKNCAQLWLGPAAFINHDCRPNCKFVSTGRDTACVKVLRDIEPGEEISCYYGDGFFGENNEFCECYTCERRGTGAFKSKPGLPVEAPVINSKYGLRETDKRLNRLKKLGESCRNSDSQSVSSNAEADSQEPTTVQTSLRKRTSQSCVKKHGEAKAVTRQTLSSTPSSTSSSKRSQANISSLPKRLKSKPTQTLSKGRRRCRGLWTKGSSRVSASGNLKESSRRDTDRRRSASKGSVARSSENNRSSSKGASPCKDSTLCPYRTRRSTRTSLGAQGAEGTEASNHPASPSIVLKSEPGEFIPVTLGHQMSTPSLDSSCPKKGTCPRRRRTVKQEDSYGESFVQEGVPDLRHAVRAADVADCGKVVLGLPDRHQHYNGSSKSSKALRRGKGKKKRQITRYDAQLILQNNSGIPKITLRRRRDSSSSKNEPRETSSSSSSKISIKFSKEHEKDRSSSYVAKLNNGFSHGPHSSSTKLKIQLKREEDPASLHRTYPEDVTLGIVQRDAADVLDHKAAAQVGQDMEVESMSSEDDDDDYFDNEDDFIPLPPAKRLRLIVGKDSIDIDISSRRREDQSLRLNA</sequence>
<gene>
    <name evidence="3" type="primary">kmt5b</name>
    <name type="synonym">suv420h1</name>
    <name type="ORF">si:dkey-12e7.2</name>
    <name type="ORF">zgc:103527</name>
</gene>